<feature type="chain" id="PRO_0000235419" description="Holliday junction branch migration complex subunit RuvB 1">
    <location>
        <begin position="1"/>
        <end position="378"/>
    </location>
</feature>
<feature type="region of interest" description="Disordered" evidence="2">
    <location>
        <begin position="1"/>
        <end position="62"/>
    </location>
</feature>
<feature type="region of interest" description="Large ATPase domain (RuvB-L)" evidence="1">
    <location>
        <begin position="13"/>
        <end position="222"/>
    </location>
</feature>
<feature type="region of interest" description="Small ATPAse domain (RuvB-S)" evidence="1">
    <location>
        <begin position="223"/>
        <end position="293"/>
    </location>
</feature>
<feature type="region of interest" description="Head domain (RuvB-H)" evidence="1">
    <location>
        <begin position="296"/>
        <end position="378"/>
    </location>
</feature>
<feature type="compositionally biased region" description="Polar residues" evidence="2">
    <location>
        <begin position="1"/>
        <end position="12"/>
    </location>
</feature>
<feature type="binding site" evidence="1">
    <location>
        <position position="61"/>
    </location>
    <ligand>
        <name>ATP</name>
        <dbReference type="ChEBI" id="CHEBI:30616"/>
    </ligand>
</feature>
<feature type="binding site" evidence="1">
    <location>
        <position position="62"/>
    </location>
    <ligand>
        <name>ATP</name>
        <dbReference type="ChEBI" id="CHEBI:30616"/>
    </ligand>
</feature>
<feature type="binding site" evidence="1">
    <location>
        <position position="103"/>
    </location>
    <ligand>
        <name>ATP</name>
        <dbReference type="ChEBI" id="CHEBI:30616"/>
    </ligand>
</feature>
<feature type="binding site" evidence="1">
    <location>
        <position position="106"/>
    </location>
    <ligand>
        <name>ATP</name>
        <dbReference type="ChEBI" id="CHEBI:30616"/>
    </ligand>
</feature>
<feature type="binding site" evidence="1">
    <location>
        <position position="107"/>
    </location>
    <ligand>
        <name>ATP</name>
        <dbReference type="ChEBI" id="CHEBI:30616"/>
    </ligand>
</feature>
<feature type="binding site" evidence="1">
    <location>
        <position position="107"/>
    </location>
    <ligand>
        <name>Mg(2+)</name>
        <dbReference type="ChEBI" id="CHEBI:18420"/>
    </ligand>
</feature>
<feature type="binding site" evidence="1">
    <location>
        <position position="108"/>
    </location>
    <ligand>
        <name>ATP</name>
        <dbReference type="ChEBI" id="CHEBI:30616"/>
    </ligand>
</feature>
<feature type="binding site" evidence="1">
    <location>
        <begin position="169"/>
        <end position="171"/>
    </location>
    <ligand>
        <name>ATP</name>
        <dbReference type="ChEBI" id="CHEBI:30616"/>
    </ligand>
</feature>
<feature type="binding site" evidence="1">
    <location>
        <position position="212"/>
    </location>
    <ligand>
        <name>ATP</name>
        <dbReference type="ChEBI" id="CHEBI:30616"/>
    </ligand>
</feature>
<feature type="binding site" evidence="1">
    <location>
        <position position="222"/>
    </location>
    <ligand>
        <name>ATP</name>
        <dbReference type="ChEBI" id="CHEBI:30616"/>
    </ligand>
</feature>
<feature type="binding site" evidence="1">
    <location>
        <position position="259"/>
    </location>
    <ligand>
        <name>ATP</name>
        <dbReference type="ChEBI" id="CHEBI:30616"/>
    </ligand>
</feature>
<feature type="binding site" evidence="1">
    <location>
        <position position="351"/>
    </location>
    <ligand>
        <name>DNA</name>
        <dbReference type="ChEBI" id="CHEBI:16991"/>
    </ligand>
</feature>
<feature type="binding site" evidence="1">
    <location>
        <position position="356"/>
    </location>
    <ligand>
        <name>DNA</name>
        <dbReference type="ChEBI" id="CHEBI:16991"/>
    </ligand>
</feature>
<proteinExistence type="inferred from homology"/>
<evidence type="ECO:0000255" key="1">
    <source>
        <dbReference type="HAMAP-Rule" id="MF_00016"/>
    </source>
</evidence>
<evidence type="ECO:0000256" key="2">
    <source>
        <dbReference type="SAM" id="MobiDB-lite"/>
    </source>
</evidence>
<protein>
    <recommendedName>
        <fullName evidence="1">Holliday junction branch migration complex subunit RuvB 1</fullName>
        <ecNumber evidence="1">3.6.4.-</ecNumber>
    </recommendedName>
</protein>
<dbReference type="EC" id="3.6.4.-" evidence="1"/>
<dbReference type="EMBL" id="CP000239">
    <property type="protein sequence ID" value="ABC99965.1"/>
    <property type="molecule type" value="Genomic_DNA"/>
</dbReference>
<dbReference type="SMR" id="Q2JTM7"/>
<dbReference type="STRING" id="321327.CYA_1812"/>
<dbReference type="KEGG" id="cya:CYA_1812"/>
<dbReference type="eggNOG" id="COG2255">
    <property type="taxonomic scope" value="Bacteria"/>
</dbReference>
<dbReference type="HOGENOM" id="CLU_055599_1_0_3"/>
<dbReference type="OrthoDB" id="9804478at2"/>
<dbReference type="Proteomes" id="UP000008818">
    <property type="component" value="Chromosome"/>
</dbReference>
<dbReference type="GO" id="GO:0005737">
    <property type="term" value="C:cytoplasm"/>
    <property type="evidence" value="ECO:0007669"/>
    <property type="project" value="UniProtKB-SubCell"/>
</dbReference>
<dbReference type="GO" id="GO:0048476">
    <property type="term" value="C:Holliday junction resolvase complex"/>
    <property type="evidence" value="ECO:0007669"/>
    <property type="project" value="UniProtKB-UniRule"/>
</dbReference>
<dbReference type="GO" id="GO:0005524">
    <property type="term" value="F:ATP binding"/>
    <property type="evidence" value="ECO:0007669"/>
    <property type="project" value="UniProtKB-UniRule"/>
</dbReference>
<dbReference type="GO" id="GO:0016887">
    <property type="term" value="F:ATP hydrolysis activity"/>
    <property type="evidence" value="ECO:0007669"/>
    <property type="project" value="InterPro"/>
</dbReference>
<dbReference type="GO" id="GO:0000400">
    <property type="term" value="F:four-way junction DNA binding"/>
    <property type="evidence" value="ECO:0007669"/>
    <property type="project" value="UniProtKB-UniRule"/>
</dbReference>
<dbReference type="GO" id="GO:0009378">
    <property type="term" value="F:four-way junction helicase activity"/>
    <property type="evidence" value="ECO:0007669"/>
    <property type="project" value="InterPro"/>
</dbReference>
<dbReference type="GO" id="GO:0006310">
    <property type="term" value="P:DNA recombination"/>
    <property type="evidence" value="ECO:0007669"/>
    <property type="project" value="UniProtKB-UniRule"/>
</dbReference>
<dbReference type="GO" id="GO:0006281">
    <property type="term" value="P:DNA repair"/>
    <property type="evidence" value="ECO:0007669"/>
    <property type="project" value="UniProtKB-UniRule"/>
</dbReference>
<dbReference type="CDD" id="cd00009">
    <property type="entry name" value="AAA"/>
    <property type="match status" value="1"/>
</dbReference>
<dbReference type="Gene3D" id="1.10.8.60">
    <property type="match status" value="1"/>
</dbReference>
<dbReference type="Gene3D" id="3.40.50.300">
    <property type="entry name" value="P-loop containing nucleotide triphosphate hydrolases"/>
    <property type="match status" value="1"/>
</dbReference>
<dbReference type="Gene3D" id="1.10.10.10">
    <property type="entry name" value="Winged helix-like DNA-binding domain superfamily/Winged helix DNA-binding domain"/>
    <property type="match status" value="1"/>
</dbReference>
<dbReference type="HAMAP" id="MF_00016">
    <property type="entry name" value="DNA_HJ_migration_RuvB"/>
    <property type="match status" value="1"/>
</dbReference>
<dbReference type="InterPro" id="IPR003593">
    <property type="entry name" value="AAA+_ATPase"/>
</dbReference>
<dbReference type="InterPro" id="IPR041445">
    <property type="entry name" value="AAA_lid_4"/>
</dbReference>
<dbReference type="InterPro" id="IPR004605">
    <property type="entry name" value="DNA_helicase_Holl-junc_RuvB"/>
</dbReference>
<dbReference type="InterPro" id="IPR027417">
    <property type="entry name" value="P-loop_NTPase"/>
</dbReference>
<dbReference type="InterPro" id="IPR008824">
    <property type="entry name" value="RuvB-like_N"/>
</dbReference>
<dbReference type="InterPro" id="IPR008823">
    <property type="entry name" value="RuvB_C"/>
</dbReference>
<dbReference type="InterPro" id="IPR036388">
    <property type="entry name" value="WH-like_DNA-bd_sf"/>
</dbReference>
<dbReference type="InterPro" id="IPR036390">
    <property type="entry name" value="WH_DNA-bd_sf"/>
</dbReference>
<dbReference type="NCBIfam" id="NF000868">
    <property type="entry name" value="PRK00080.1"/>
    <property type="match status" value="1"/>
</dbReference>
<dbReference type="NCBIfam" id="TIGR00635">
    <property type="entry name" value="ruvB"/>
    <property type="match status" value="1"/>
</dbReference>
<dbReference type="PANTHER" id="PTHR42848">
    <property type="match status" value="1"/>
</dbReference>
<dbReference type="PANTHER" id="PTHR42848:SF1">
    <property type="entry name" value="HOLLIDAY JUNCTION BRANCH MIGRATION COMPLEX SUBUNIT RUVB"/>
    <property type="match status" value="1"/>
</dbReference>
<dbReference type="Pfam" id="PF17864">
    <property type="entry name" value="AAA_lid_4"/>
    <property type="match status" value="1"/>
</dbReference>
<dbReference type="Pfam" id="PF05491">
    <property type="entry name" value="RuvB_C"/>
    <property type="match status" value="1"/>
</dbReference>
<dbReference type="Pfam" id="PF05496">
    <property type="entry name" value="RuvB_N"/>
    <property type="match status" value="1"/>
</dbReference>
<dbReference type="SMART" id="SM00382">
    <property type="entry name" value="AAA"/>
    <property type="match status" value="1"/>
</dbReference>
<dbReference type="SUPFAM" id="SSF52540">
    <property type="entry name" value="P-loop containing nucleoside triphosphate hydrolases"/>
    <property type="match status" value="1"/>
</dbReference>
<dbReference type="SUPFAM" id="SSF46785">
    <property type="entry name" value="Winged helix' DNA-binding domain"/>
    <property type="match status" value="1"/>
</dbReference>
<accession>Q2JTM7</accession>
<name>RUVB1_SYNJA</name>
<sequence length="378" mass="41945">MAIISSRDTGQNAEGPKRRQQKSSAWRKEGRELSFAGERGADPSALLQPQAHPGEAQEESLRPRTLAEYIGQTELKEVLSIAIAAARARQEPLDHLLFYGPPGLGKTTVAAVLAAEMGSQFYMTTAPALESPRDIAGYLVRLKRGDVLFIDEIHRLPKVTEELLYPAMEDFRLDITIGKGRSARITSLPLERFTLIGATTRIGALTSPLRDRFGHVQRLRFYEPHELVQIVLRTARLLNVSTDPEGAAEIARRSRGTPRIANRLFKRVRDYAQVRGDGHISQEVAAAALELFQVDPMGLDWIDRKLLTVLVEQFGGGPVGLETMAAVTGEDPQTIEEVYEPYLLQIGYLQRTPRGRVVTPAALRHLGYEAQSPLPLWS</sequence>
<organism>
    <name type="scientific">Synechococcus sp. (strain JA-3-3Ab)</name>
    <name type="common">Cyanobacteria bacterium Yellowstone A-Prime</name>
    <dbReference type="NCBI Taxonomy" id="321327"/>
    <lineage>
        <taxon>Bacteria</taxon>
        <taxon>Bacillati</taxon>
        <taxon>Cyanobacteriota</taxon>
        <taxon>Cyanophyceae</taxon>
        <taxon>Synechococcales</taxon>
        <taxon>Synechococcaceae</taxon>
        <taxon>Synechococcus</taxon>
    </lineage>
</organism>
<gene>
    <name evidence="1" type="primary">ruvB1</name>
    <name type="synonym">ruvB-1</name>
    <name type="ordered locus">CYA_1812</name>
</gene>
<comment type="function">
    <text evidence="1">The RuvA-RuvB-RuvC complex processes Holliday junction (HJ) DNA during genetic recombination and DNA repair, while the RuvA-RuvB complex plays an important role in the rescue of blocked DNA replication forks via replication fork reversal (RFR). RuvA specifically binds to HJ cruciform DNA, conferring on it an open structure. The RuvB hexamer acts as an ATP-dependent pump, pulling dsDNA into and through the RuvAB complex. RuvB forms 2 homohexamers on either side of HJ DNA bound by 1 or 2 RuvA tetramers; 4 subunits per hexamer contact DNA at a time. Coordinated motions by a converter formed by DNA-disengaged RuvB subunits stimulates ATP hydrolysis and nucleotide exchange. Immobilization of the converter enables RuvB to convert the ATP-contained energy into a lever motion, pulling 2 nucleotides of DNA out of the RuvA tetramer per ATP hydrolyzed, thus driving DNA branch migration. The RuvB motors rotate together with the DNA substrate, which together with the progressing nucleotide cycle form the mechanistic basis for DNA recombination by continuous HJ branch migration. Branch migration allows RuvC to scan DNA until it finds its consensus sequence, where it cleaves and resolves cruciform DNA.</text>
</comment>
<comment type="catalytic activity">
    <reaction evidence="1">
        <text>ATP + H2O = ADP + phosphate + H(+)</text>
        <dbReference type="Rhea" id="RHEA:13065"/>
        <dbReference type="ChEBI" id="CHEBI:15377"/>
        <dbReference type="ChEBI" id="CHEBI:15378"/>
        <dbReference type="ChEBI" id="CHEBI:30616"/>
        <dbReference type="ChEBI" id="CHEBI:43474"/>
        <dbReference type="ChEBI" id="CHEBI:456216"/>
    </reaction>
</comment>
<comment type="subunit">
    <text evidence="1">Homohexamer. Forms an RuvA(8)-RuvB(12)-Holliday junction (HJ) complex. HJ DNA is sandwiched between 2 RuvA tetramers; dsDNA enters through RuvA and exits via RuvB. An RuvB hexamer assembles on each DNA strand where it exits the tetramer. Each RuvB hexamer is contacted by two RuvA subunits (via domain III) on 2 adjacent RuvB subunits; this complex drives branch migration. In the full resolvosome a probable DNA-RuvA(4)-RuvB(12)-RuvC(2) complex forms which resolves the HJ.</text>
</comment>
<comment type="subcellular location">
    <subcellularLocation>
        <location evidence="1">Cytoplasm</location>
    </subcellularLocation>
</comment>
<comment type="domain">
    <text evidence="1">Has 3 domains, the large (RuvB-L) and small ATPase (RuvB-S) domains and the C-terminal head (RuvB-H) domain. The head domain binds DNA, while the ATPase domains jointly bind ATP, ADP or are empty depending on the state of the subunit in the translocation cycle. During a single DNA translocation step the structure of each domain remains the same, but their relative positions change.</text>
</comment>
<comment type="similarity">
    <text evidence="1">Belongs to the RuvB family.</text>
</comment>
<keyword id="KW-0067">ATP-binding</keyword>
<keyword id="KW-0963">Cytoplasm</keyword>
<keyword id="KW-0227">DNA damage</keyword>
<keyword id="KW-0233">DNA recombination</keyword>
<keyword id="KW-0234">DNA repair</keyword>
<keyword id="KW-0238">DNA-binding</keyword>
<keyword id="KW-0378">Hydrolase</keyword>
<keyword id="KW-0547">Nucleotide-binding</keyword>
<reference key="1">
    <citation type="journal article" date="2007" name="ISME J.">
        <title>Population level functional diversity in a microbial community revealed by comparative genomic and metagenomic analyses.</title>
        <authorList>
            <person name="Bhaya D."/>
            <person name="Grossman A.R."/>
            <person name="Steunou A.-S."/>
            <person name="Khuri N."/>
            <person name="Cohan F.M."/>
            <person name="Hamamura N."/>
            <person name="Melendrez M.C."/>
            <person name="Bateson M.M."/>
            <person name="Ward D.M."/>
            <person name="Heidelberg J.F."/>
        </authorList>
    </citation>
    <scope>NUCLEOTIDE SEQUENCE [LARGE SCALE GENOMIC DNA]</scope>
    <source>
        <strain>JA-3-3Ab</strain>
    </source>
</reference>